<proteinExistence type="inferred from homology"/>
<reference key="1">
    <citation type="submission" date="2007-03" db="EMBL/GenBank/DDBJ databases">
        <title>Complete sequence of Prosthecochloris vibrioformis DSM 265.</title>
        <authorList>
            <consortium name="US DOE Joint Genome Institute"/>
            <person name="Copeland A."/>
            <person name="Lucas S."/>
            <person name="Lapidus A."/>
            <person name="Barry K."/>
            <person name="Detter J.C."/>
            <person name="Glavina del Rio T."/>
            <person name="Hammon N."/>
            <person name="Israni S."/>
            <person name="Pitluck S."/>
            <person name="Schmutz J."/>
            <person name="Larimer F."/>
            <person name="Land M."/>
            <person name="Hauser L."/>
            <person name="Mikhailova N."/>
            <person name="Li T."/>
            <person name="Overmann J."/>
            <person name="Schuster S.C."/>
            <person name="Bryant D.A."/>
            <person name="Richardson P."/>
        </authorList>
    </citation>
    <scope>NUCLEOTIDE SEQUENCE [LARGE SCALE GENOMIC DNA]</scope>
    <source>
        <strain>DSM 265 / 1930</strain>
    </source>
</reference>
<accession>A4SF37</accession>
<dbReference type="EC" id="3.5.4.16" evidence="1"/>
<dbReference type="EMBL" id="CP000607">
    <property type="protein sequence ID" value="ABP37096.1"/>
    <property type="molecule type" value="Genomic_DNA"/>
</dbReference>
<dbReference type="SMR" id="A4SF37"/>
<dbReference type="STRING" id="290318.Cvib_1082"/>
<dbReference type="KEGG" id="pvi:Cvib_1082"/>
<dbReference type="eggNOG" id="COG0302">
    <property type="taxonomic scope" value="Bacteria"/>
</dbReference>
<dbReference type="HOGENOM" id="CLU_049768_3_1_10"/>
<dbReference type="OrthoDB" id="9801207at2"/>
<dbReference type="UniPathway" id="UPA00848">
    <property type="reaction ID" value="UER00151"/>
</dbReference>
<dbReference type="GO" id="GO:0005737">
    <property type="term" value="C:cytoplasm"/>
    <property type="evidence" value="ECO:0007669"/>
    <property type="project" value="TreeGrafter"/>
</dbReference>
<dbReference type="GO" id="GO:0005525">
    <property type="term" value="F:GTP binding"/>
    <property type="evidence" value="ECO:0007669"/>
    <property type="project" value="UniProtKB-KW"/>
</dbReference>
<dbReference type="GO" id="GO:0003934">
    <property type="term" value="F:GTP cyclohydrolase I activity"/>
    <property type="evidence" value="ECO:0007669"/>
    <property type="project" value="UniProtKB-UniRule"/>
</dbReference>
<dbReference type="GO" id="GO:0008270">
    <property type="term" value="F:zinc ion binding"/>
    <property type="evidence" value="ECO:0007669"/>
    <property type="project" value="UniProtKB-UniRule"/>
</dbReference>
<dbReference type="GO" id="GO:0006730">
    <property type="term" value="P:one-carbon metabolic process"/>
    <property type="evidence" value="ECO:0007669"/>
    <property type="project" value="UniProtKB-UniRule"/>
</dbReference>
<dbReference type="GO" id="GO:0006729">
    <property type="term" value="P:tetrahydrobiopterin biosynthetic process"/>
    <property type="evidence" value="ECO:0007669"/>
    <property type="project" value="TreeGrafter"/>
</dbReference>
<dbReference type="GO" id="GO:0046654">
    <property type="term" value="P:tetrahydrofolate biosynthetic process"/>
    <property type="evidence" value="ECO:0007669"/>
    <property type="project" value="UniProtKB-UniRule"/>
</dbReference>
<dbReference type="CDD" id="cd00642">
    <property type="entry name" value="GTP_cyclohydro1"/>
    <property type="match status" value="1"/>
</dbReference>
<dbReference type="FunFam" id="3.30.1130.10:FF:000001">
    <property type="entry name" value="GTP cyclohydrolase 1"/>
    <property type="match status" value="1"/>
</dbReference>
<dbReference type="Gene3D" id="1.10.286.10">
    <property type="match status" value="1"/>
</dbReference>
<dbReference type="Gene3D" id="3.30.1130.10">
    <property type="match status" value="1"/>
</dbReference>
<dbReference type="HAMAP" id="MF_00223">
    <property type="entry name" value="FolE"/>
    <property type="match status" value="1"/>
</dbReference>
<dbReference type="InterPro" id="IPR043133">
    <property type="entry name" value="GTP-CH-I_C/QueF"/>
</dbReference>
<dbReference type="InterPro" id="IPR043134">
    <property type="entry name" value="GTP-CH-I_N"/>
</dbReference>
<dbReference type="InterPro" id="IPR001474">
    <property type="entry name" value="GTP_CycHdrlase_I"/>
</dbReference>
<dbReference type="InterPro" id="IPR018234">
    <property type="entry name" value="GTP_CycHdrlase_I_CS"/>
</dbReference>
<dbReference type="InterPro" id="IPR020602">
    <property type="entry name" value="GTP_CycHdrlase_I_dom"/>
</dbReference>
<dbReference type="NCBIfam" id="TIGR00063">
    <property type="entry name" value="folE"/>
    <property type="match status" value="1"/>
</dbReference>
<dbReference type="NCBIfam" id="NF006825">
    <property type="entry name" value="PRK09347.1-2"/>
    <property type="match status" value="1"/>
</dbReference>
<dbReference type="NCBIfam" id="NF006826">
    <property type="entry name" value="PRK09347.1-3"/>
    <property type="match status" value="1"/>
</dbReference>
<dbReference type="PANTHER" id="PTHR11109:SF7">
    <property type="entry name" value="GTP CYCLOHYDROLASE 1"/>
    <property type="match status" value="1"/>
</dbReference>
<dbReference type="PANTHER" id="PTHR11109">
    <property type="entry name" value="GTP CYCLOHYDROLASE I"/>
    <property type="match status" value="1"/>
</dbReference>
<dbReference type="Pfam" id="PF01227">
    <property type="entry name" value="GTP_cyclohydroI"/>
    <property type="match status" value="1"/>
</dbReference>
<dbReference type="SUPFAM" id="SSF55620">
    <property type="entry name" value="Tetrahydrobiopterin biosynthesis enzymes-like"/>
    <property type="match status" value="1"/>
</dbReference>
<dbReference type="PROSITE" id="PS00859">
    <property type="entry name" value="GTP_CYCLOHYDROL_1_1"/>
    <property type="match status" value="1"/>
</dbReference>
<dbReference type="PROSITE" id="PS00860">
    <property type="entry name" value="GTP_CYCLOHYDROL_1_2"/>
    <property type="match status" value="1"/>
</dbReference>
<organism>
    <name type="scientific">Chlorobium phaeovibrioides (strain DSM 265 / 1930)</name>
    <name type="common">Prosthecochloris vibrioformis (strain DSM 265)</name>
    <dbReference type="NCBI Taxonomy" id="290318"/>
    <lineage>
        <taxon>Bacteria</taxon>
        <taxon>Pseudomonadati</taxon>
        <taxon>Chlorobiota</taxon>
        <taxon>Chlorobiia</taxon>
        <taxon>Chlorobiales</taxon>
        <taxon>Chlorobiaceae</taxon>
        <taxon>Chlorobium/Pelodictyon group</taxon>
        <taxon>Chlorobium</taxon>
    </lineage>
</organism>
<name>GCH1_CHLPM</name>
<comment type="catalytic activity">
    <reaction evidence="1">
        <text>GTP + H2O = 7,8-dihydroneopterin 3'-triphosphate + formate + H(+)</text>
        <dbReference type="Rhea" id="RHEA:17473"/>
        <dbReference type="ChEBI" id="CHEBI:15377"/>
        <dbReference type="ChEBI" id="CHEBI:15378"/>
        <dbReference type="ChEBI" id="CHEBI:15740"/>
        <dbReference type="ChEBI" id="CHEBI:37565"/>
        <dbReference type="ChEBI" id="CHEBI:58462"/>
        <dbReference type="EC" id="3.5.4.16"/>
    </reaction>
</comment>
<comment type="pathway">
    <text evidence="1">Cofactor biosynthesis; 7,8-dihydroneopterin triphosphate biosynthesis; 7,8-dihydroneopterin triphosphate from GTP: step 1/1.</text>
</comment>
<comment type="subunit">
    <text evidence="1">Homomer.</text>
</comment>
<comment type="similarity">
    <text evidence="1">Belongs to the GTP cyclohydrolase I family.</text>
</comment>
<protein>
    <recommendedName>
        <fullName evidence="1">GTP cyclohydrolase 1</fullName>
        <ecNumber evidence="1">3.5.4.16</ecNumber>
    </recommendedName>
    <alternativeName>
        <fullName evidence="1">GTP cyclohydrolase I</fullName>
        <shortName evidence="1">GTP-CH-I</shortName>
    </alternativeName>
</protein>
<sequence>MKQEKTVSATLVNNPALTGRGTCCDDDECLNDPAQLPAEIMESMSESVYTLLEGVGEDPEREGLLKTPERVARSLAFLTRGYRQDPEEMLKKAVFTESYDEMVLVKDIDIFSMCEHHMLPFFGKAHVAYIPDGKIVGLSKLARVVEVFARRLQVQERLTQQIRDAIQDVLHPKGVGVVIEAKHMCMVMRGVEKLNSVTTTSAMSGEFISSESTRGEFLRLIRP</sequence>
<feature type="chain" id="PRO_1000078146" description="GTP cyclohydrolase 1">
    <location>
        <begin position="1"/>
        <end position="223"/>
    </location>
</feature>
<feature type="binding site" evidence="1">
    <location>
        <position position="114"/>
    </location>
    <ligand>
        <name>Zn(2+)</name>
        <dbReference type="ChEBI" id="CHEBI:29105"/>
    </ligand>
</feature>
<feature type="binding site" evidence="1">
    <location>
        <position position="117"/>
    </location>
    <ligand>
        <name>Zn(2+)</name>
        <dbReference type="ChEBI" id="CHEBI:29105"/>
    </ligand>
</feature>
<feature type="binding site" evidence="1">
    <location>
        <position position="185"/>
    </location>
    <ligand>
        <name>Zn(2+)</name>
        <dbReference type="ChEBI" id="CHEBI:29105"/>
    </ligand>
</feature>
<evidence type="ECO:0000255" key="1">
    <source>
        <dbReference type="HAMAP-Rule" id="MF_00223"/>
    </source>
</evidence>
<keyword id="KW-0342">GTP-binding</keyword>
<keyword id="KW-0378">Hydrolase</keyword>
<keyword id="KW-0479">Metal-binding</keyword>
<keyword id="KW-0547">Nucleotide-binding</keyword>
<keyword id="KW-0554">One-carbon metabolism</keyword>
<keyword id="KW-0862">Zinc</keyword>
<gene>
    <name evidence="1" type="primary">folE</name>
    <name type="ordered locus">Cvib_1082</name>
</gene>